<reference evidence="4" key="1">
    <citation type="journal article" date="2017" name="J. Nat. Prod.">
        <title>Understanding the Diversity and Distribution of Cyclotides from Plants of Varied Genetic Origin.</title>
        <authorList>
            <person name="Ravipati A.S."/>
            <person name="Poth A.G."/>
            <person name="Troeira Henriques S."/>
            <person name="Bhandari M."/>
            <person name="Huang Y.H."/>
            <person name="Nino J."/>
            <person name="Colgrave M.L."/>
            <person name="Craik D.J."/>
        </authorList>
    </citation>
    <scope>PROTEIN SEQUENCE</scope>
</reference>
<accession>C0HKJ4</accession>
<evidence type="ECO:0000255" key="1">
    <source>
        <dbReference type="PROSITE-ProRule" id="PRU00395"/>
    </source>
</evidence>
<evidence type="ECO:0000269" key="2">
    <source>
    </source>
</evidence>
<evidence type="ECO:0000303" key="3">
    <source>
    </source>
</evidence>
<evidence type="ECO:0000305" key="4"/>
<comment type="function">
    <text evidence="1">Probably participates in a plant defense mechanism.</text>
</comment>
<comment type="domain">
    <text evidence="4">The presence of a 'disulfide through disulfide knot' structurally defines this protein as a knottin.</text>
</comment>
<comment type="PTM">
    <text evidence="1">This is a cyclic peptide.</text>
</comment>
<comment type="similarity">
    <text evidence="1">Belongs to the cyclotide family. Bracelet subfamily.</text>
</comment>
<comment type="caution">
    <text evidence="1">This peptide is cyclic. The start position was chosen by similarity to Oak1 (kalata B1) for which the DNA sequence is known.</text>
</comment>
<organism evidence="3">
    <name type="scientific">Melicytus dentatus</name>
    <name type="common">Tree violet</name>
    <dbReference type="NCBI Taxonomy" id="491106"/>
    <lineage>
        <taxon>Eukaryota</taxon>
        <taxon>Viridiplantae</taxon>
        <taxon>Streptophyta</taxon>
        <taxon>Embryophyta</taxon>
        <taxon>Tracheophyta</taxon>
        <taxon>Spermatophyta</taxon>
        <taxon>Magnoliopsida</taxon>
        <taxon>eudicotyledons</taxon>
        <taxon>Gunneridae</taxon>
        <taxon>Pentapetalae</taxon>
        <taxon>rosids</taxon>
        <taxon>fabids</taxon>
        <taxon>Malpighiales</taxon>
        <taxon>Violaceae</taxon>
        <taxon>Melicytus</taxon>
    </lineage>
</organism>
<keyword id="KW-0903">Direct protein sequencing</keyword>
<keyword id="KW-1015">Disulfide bond</keyword>
<keyword id="KW-0611">Plant defense</keyword>
<proteinExistence type="evidence at protein level"/>
<dbReference type="SMR" id="C0HKJ4"/>
<dbReference type="GO" id="GO:0006952">
    <property type="term" value="P:defense response"/>
    <property type="evidence" value="ECO:0007669"/>
    <property type="project" value="UniProtKB-KW"/>
</dbReference>
<dbReference type="InterPro" id="IPR005535">
    <property type="entry name" value="Cyclotide"/>
</dbReference>
<dbReference type="InterPro" id="IPR012323">
    <property type="entry name" value="Cyclotide_bracelet_CS"/>
</dbReference>
<dbReference type="InterPro" id="IPR036146">
    <property type="entry name" value="Cyclotide_sf"/>
</dbReference>
<dbReference type="Pfam" id="PF03784">
    <property type="entry name" value="Cyclotide"/>
    <property type="match status" value="1"/>
</dbReference>
<dbReference type="PIRSF" id="PIRSF037891">
    <property type="entry name" value="Cycloviolacin"/>
    <property type="match status" value="1"/>
</dbReference>
<dbReference type="SUPFAM" id="SSF57038">
    <property type="entry name" value="Cyclotides"/>
    <property type="match status" value="1"/>
</dbReference>
<dbReference type="PROSITE" id="PS51052">
    <property type="entry name" value="CYCLOTIDE"/>
    <property type="match status" value="1"/>
</dbReference>
<dbReference type="PROSITE" id="PS60008">
    <property type="entry name" value="CYCLOTIDE_BRACELET"/>
    <property type="match status" value="1"/>
</dbReference>
<sequence>GSIPCGESCVYIPCISAVLGCSCKNKVCYRN</sequence>
<protein>
    <recommendedName>
        <fullName evidence="3">Cyclotide mden-L</fullName>
    </recommendedName>
</protein>
<name>CYMEL_MELDN</name>
<feature type="peptide" id="PRO_0000441367" description="Cyclotide mden-L" evidence="2">
    <location>
        <begin position="1"/>
        <end position="31"/>
    </location>
</feature>
<feature type="disulfide bond" evidence="1">
    <location>
        <begin position="5"/>
        <end position="21"/>
    </location>
</feature>
<feature type="disulfide bond" evidence="1">
    <location>
        <begin position="9"/>
        <end position="23"/>
    </location>
</feature>
<feature type="disulfide bond" evidence="1">
    <location>
        <begin position="14"/>
        <end position="28"/>
    </location>
</feature>
<feature type="cross-link" description="Cyclopeptide (Gly-Asn)" evidence="3">
    <location>
        <begin position="1"/>
        <end position="31"/>
    </location>
</feature>